<evidence type="ECO:0000255" key="1">
    <source>
        <dbReference type="HAMAP-Rule" id="MF_00130"/>
    </source>
</evidence>
<evidence type="ECO:0000256" key="2">
    <source>
        <dbReference type="SAM" id="MobiDB-lite"/>
    </source>
</evidence>
<protein>
    <recommendedName>
        <fullName evidence="1">Holliday junction resolvase RecU</fullName>
        <ecNumber evidence="1">3.1.21.10</ecNumber>
    </recommendedName>
    <alternativeName>
        <fullName evidence="1">Recombination protein U homolog</fullName>
    </alternativeName>
</protein>
<name>RECU_BACLD</name>
<organism>
    <name type="scientific">Bacillus licheniformis (strain ATCC 14580 / DSM 13 / JCM 2505 / CCUG 7422 / NBRC 12200 / NCIMB 9375 / NCTC 10341 / NRRL NRS-1264 / Gibson 46)</name>
    <dbReference type="NCBI Taxonomy" id="279010"/>
    <lineage>
        <taxon>Bacteria</taxon>
        <taxon>Bacillati</taxon>
        <taxon>Bacillota</taxon>
        <taxon>Bacilli</taxon>
        <taxon>Bacillales</taxon>
        <taxon>Bacillaceae</taxon>
        <taxon>Bacillus</taxon>
    </lineage>
</organism>
<keyword id="KW-0963">Cytoplasm</keyword>
<keyword id="KW-0227">DNA damage</keyword>
<keyword id="KW-0233">DNA recombination</keyword>
<keyword id="KW-0234">DNA repair</keyword>
<keyword id="KW-0255">Endonuclease</keyword>
<keyword id="KW-0378">Hydrolase</keyword>
<keyword id="KW-0460">Magnesium</keyword>
<keyword id="KW-0479">Metal-binding</keyword>
<keyword id="KW-0540">Nuclease</keyword>
<keyword id="KW-1185">Reference proteome</keyword>
<comment type="function">
    <text evidence="1">Endonuclease that resolves Holliday junction intermediates in genetic recombination. Cleaves mobile four-strand junctions by introducing symmetrical nicks in paired strands. Promotes annealing of linear ssDNA with homologous dsDNA. Required for DNA repair, homologous recombination and chromosome segregation.</text>
</comment>
<comment type="catalytic activity">
    <reaction evidence="1">
        <text>Endonucleolytic cleavage at a junction such as a reciprocal single-stranded crossover between two homologous DNA duplexes (Holliday junction).</text>
        <dbReference type="EC" id="3.1.21.10"/>
    </reaction>
</comment>
<comment type="cofactor">
    <cofactor evidence="1">
        <name>Mg(2+)</name>
        <dbReference type="ChEBI" id="CHEBI:18420"/>
    </cofactor>
    <text evidence="1">Binds 1 Mg(2+) ion per subunit.</text>
</comment>
<comment type="subcellular location">
    <subcellularLocation>
        <location evidence="1">Cytoplasm</location>
    </subcellularLocation>
</comment>
<comment type="similarity">
    <text evidence="1">Belongs to the RecU family.</text>
</comment>
<accession>Q65I68</accession>
<accession>Q62TL7</accession>
<reference key="1">
    <citation type="journal article" date="2004" name="J. Mol. Microbiol. Biotechnol.">
        <title>The complete genome sequence of Bacillus licheniformis DSM13, an organism with great industrial potential.</title>
        <authorList>
            <person name="Veith B."/>
            <person name="Herzberg C."/>
            <person name="Steckel S."/>
            <person name="Feesche J."/>
            <person name="Maurer K.H."/>
            <person name="Ehrenreich P."/>
            <person name="Baeumer S."/>
            <person name="Henne A."/>
            <person name="Liesegang H."/>
            <person name="Merkl R."/>
            <person name="Ehrenreich A."/>
            <person name="Gottschalk G."/>
        </authorList>
    </citation>
    <scope>NUCLEOTIDE SEQUENCE [LARGE SCALE GENOMIC DNA]</scope>
    <source>
        <strain>ATCC 14580 / DSM 13 / JCM 2505 / CCUG 7422 / NBRC 12200 / NCIMB 9375 / NCTC 10341 / NRRL NRS-1264 / Gibson 46</strain>
    </source>
</reference>
<reference key="2">
    <citation type="journal article" date="2004" name="Genome Biol.">
        <title>Complete genome sequence of the industrial bacterium Bacillus licheniformis and comparisons with closely related Bacillus species.</title>
        <authorList>
            <person name="Rey M.W."/>
            <person name="Ramaiya P."/>
            <person name="Nelson B.A."/>
            <person name="Brody-Karpin S.D."/>
            <person name="Zaretsky E.J."/>
            <person name="Tang M."/>
            <person name="Lopez de Leon A."/>
            <person name="Xiang H."/>
            <person name="Gusti V."/>
            <person name="Clausen I.G."/>
            <person name="Olsen P.B."/>
            <person name="Rasmussen M.D."/>
            <person name="Andersen J.T."/>
            <person name="Joergensen P.L."/>
            <person name="Larsen T.S."/>
            <person name="Sorokin A."/>
            <person name="Bolotin A."/>
            <person name="Lapidus A."/>
            <person name="Galleron N."/>
            <person name="Ehrlich S.D."/>
            <person name="Berka R.M."/>
        </authorList>
    </citation>
    <scope>NUCLEOTIDE SEQUENCE [LARGE SCALE GENOMIC DNA]</scope>
    <source>
        <strain>ATCC 14580 / DSM 13 / JCM 2505 / CCUG 7422 / NBRC 12200 / NCIMB 9375 / NCTC 10341 / NRRL NRS-1264 / Gibson 46</strain>
    </source>
</reference>
<gene>
    <name evidence="1" type="primary">recU</name>
    <name type="ordered locus">BLi02366</name>
    <name type="ordered locus">BL02731</name>
</gene>
<dbReference type="EC" id="3.1.21.10" evidence="1"/>
<dbReference type="EMBL" id="CP000002">
    <property type="protein sequence ID" value="AAU23892.1"/>
    <property type="molecule type" value="Genomic_DNA"/>
</dbReference>
<dbReference type="EMBL" id="AE017333">
    <property type="protein sequence ID" value="AAU41246.1"/>
    <property type="molecule type" value="Genomic_DNA"/>
</dbReference>
<dbReference type="RefSeq" id="WP_003182896.1">
    <property type="nucleotide sequence ID" value="NC_006322.1"/>
</dbReference>
<dbReference type="SMR" id="Q65I68"/>
<dbReference type="STRING" id="279010.BL02731"/>
<dbReference type="GeneID" id="92861035"/>
<dbReference type="KEGG" id="bld:BLi02366"/>
<dbReference type="KEGG" id="bli:BL02731"/>
<dbReference type="eggNOG" id="COG3331">
    <property type="taxonomic scope" value="Bacteria"/>
</dbReference>
<dbReference type="HOGENOM" id="CLU_096340_0_0_9"/>
<dbReference type="Proteomes" id="UP000000606">
    <property type="component" value="Chromosome"/>
</dbReference>
<dbReference type="Bgee" id="BL02731">
    <property type="expression patterns" value="Expressed in primary dorsal nerve cord and 1 other cell type or tissue"/>
</dbReference>
<dbReference type="GO" id="GO:0005737">
    <property type="term" value="C:cytoplasm"/>
    <property type="evidence" value="ECO:0007669"/>
    <property type="project" value="UniProtKB-SubCell"/>
</dbReference>
<dbReference type="GO" id="GO:0004519">
    <property type="term" value="F:endonuclease activity"/>
    <property type="evidence" value="ECO:0007669"/>
    <property type="project" value="UniProtKB-UniRule"/>
</dbReference>
<dbReference type="GO" id="GO:0000287">
    <property type="term" value="F:magnesium ion binding"/>
    <property type="evidence" value="ECO:0007669"/>
    <property type="project" value="UniProtKB-UniRule"/>
</dbReference>
<dbReference type="GO" id="GO:0003676">
    <property type="term" value="F:nucleic acid binding"/>
    <property type="evidence" value="ECO:0007669"/>
    <property type="project" value="InterPro"/>
</dbReference>
<dbReference type="GO" id="GO:0007059">
    <property type="term" value="P:chromosome segregation"/>
    <property type="evidence" value="ECO:0007669"/>
    <property type="project" value="UniProtKB-UniRule"/>
</dbReference>
<dbReference type="GO" id="GO:0006310">
    <property type="term" value="P:DNA recombination"/>
    <property type="evidence" value="ECO:0007669"/>
    <property type="project" value="UniProtKB-UniRule"/>
</dbReference>
<dbReference type="GO" id="GO:0006281">
    <property type="term" value="P:DNA repair"/>
    <property type="evidence" value="ECO:0007669"/>
    <property type="project" value="UniProtKB-UniRule"/>
</dbReference>
<dbReference type="CDD" id="cd22354">
    <property type="entry name" value="RecU-like"/>
    <property type="match status" value="1"/>
</dbReference>
<dbReference type="Gene3D" id="3.40.1350.10">
    <property type="match status" value="1"/>
</dbReference>
<dbReference type="HAMAP" id="MF_00130">
    <property type="entry name" value="RecU"/>
    <property type="match status" value="1"/>
</dbReference>
<dbReference type="InterPro" id="IPR004612">
    <property type="entry name" value="Resolv_RecU"/>
</dbReference>
<dbReference type="InterPro" id="IPR011335">
    <property type="entry name" value="Restrct_endonuc-II-like"/>
</dbReference>
<dbReference type="InterPro" id="IPR011856">
    <property type="entry name" value="tRNA_endonuc-like_dom_sf"/>
</dbReference>
<dbReference type="NCBIfam" id="NF002581">
    <property type="entry name" value="PRK02234.1-2"/>
    <property type="match status" value="1"/>
</dbReference>
<dbReference type="NCBIfam" id="NF002584">
    <property type="entry name" value="PRK02234.1-5"/>
    <property type="match status" value="1"/>
</dbReference>
<dbReference type="NCBIfam" id="TIGR00648">
    <property type="entry name" value="recU"/>
    <property type="match status" value="1"/>
</dbReference>
<dbReference type="Pfam" id="PF03838">
    <property type="entry name" value="RecU"/>
    <property type="match status" value="1"/>
</dbReference>
<dbReference type="PIRSF" id="PIRSF037785">
    <property type="entry name" value="RecU"/>
    <property type="match status" value="1"/>
</dbReference>
<dbReference type="SUPFAM" id="SSF52980">
    <property type="entry name" value="Restriction endonuclease-like"/>
    <property type="match status" value="1"/>
</dbReference>
<feature type="chain" id="PRO_1000016721" description="Holliday junction resolvase RecU">
    <location>
        <begin position="1"/>
        <end position="198"/>
    </location>
</feature>
<feature type="region of interest" description="Disordered" evidence="2">
    <location>
        <begin position="1"/>
        <end position="29"/>
    </location>
</feature>
<feature type="compositionally biased region" description="Polar residues" evidence="2">
    <location>
        <begin position="8"/>
        <end position="29"/>
    </location>
</feature>
<feature type="binding site" evidence="1">
    <location>
        <position position="83"/>
    </location>
    <ligand>
        <name>Mg(2+)</name>
        <dbReference type="ChEBI" id="CHEBI:18420"/>
    </ligand>
</feature>
<feature type="binding site" evidence="1">
    <location>
        <position position="85"/>
    </location>
    <ligand>
        <name>Mg(2+)</name>
        <dbReference type="ChEBI" id="CHEBI:18420"/>
    </ligand>
</feature>
<feature type="binding site" evidence="1">
    <location>
        <position position="98"/>
    </location>
    <ligand>
        <name>Mg(2+)</name>
        <dbReference type="ChEBI" id="CHEBI:18420"/>
    </ligand>
</feature>
<feature type="binding site" evidence="1">
    <location>
        <position position="117"/>
    </location>
    <ligand>
        <name>Mg(2+)</name>
        <dbReference type="ChEBI" id="CHEBI:18420"/>
    </ligand>
</feature>
<feature type="site" description="Transition state stabilizer" evidence="1">
    <location>
        <position position="100"/>
    </location>
</feature>
<sequence length="198" mass="23143">MIRYPNGKSYQPKTAASSLQKKPSYSNRGMTLEDDLNETNMYYQSHSIAVIHKKPTPVQIVQVDYPKRSAAVIKEAYFKQSSTTDYNGVYKGRYIDFEAKETKSRTSFPLQNFHDHQIEHMKQVVAQDGICFVIISAFEEIYFLEAEKLFYFWERKKQNGRKSIRKDELQEAAHPISLGYSPRIDYIKIIDQLYFSPS</sequence>
<proteinExistence type="inferred from homology"/>